<dbReference type="EMBL" id="X04830">
    <property type="protein sequence ID" value="CAA28521.1"/>
    <property type="molecule type" value="Genomic_DNA"/>
</dbReference>
<dbReference type="EMBL" id="M28829">
    <property type="protein sequence ID" value="AAA26446.1"/>
    <property type="molecule type" value="Genomic_DNA"/>
</dbReference>
<dbReference type="PIR" id="JH0127">
    <property type="entry name" value="JH0127"/>
</dbReference>
<dbReference type="RefSeq" id="NP_044305.1">
    <property type="nucleotide sequence ID" value="NC_001740.1"/>
</dbReference>
<dbReference type="RefSeq" id="WP_010890157.1">
    <property type="nucleotide sequence ID" value="NZ_WVUO01000113.1"/>
</dbReference>
<dbReference type="SMR" id="P07113"/>
<dbReference type="InterPro" id="IPR020369">
    <property type="entry name" value="Mobilisation_protein_B"/>
</dbReference>
<dbReference type="Pfam" id="PF17511">
    <property type="entry name" value="Mobilization_B"/>
    <property type="match status" value="1"/>
</dbReference>
<reference key="1">
    <citation type="journal article" date="1987" name="Mol. Gen. Genet.">
        <title>Mobilization of the non-conjugative plasmid RSF1010: a genetic and DNA sequence analysis of the mobilization region.</title>
        <authorList>
            <person name="Derbyshire K.M."/>
            <person name="Hatfull G."/>
            <person name="Willetts N."/>
        </authorList>
    </citation>
    <scope>NUCLEOTIDE SEQUENCE [GENOMIC DNA]</scope>
</reference>
<reference key="2">
    <citation type="journal article" date="1989" name="Gene">
        <title>Complete nucleotide sequence and gene organization of the broad-host-range plasmid RSF1010.</title>
        <authorList>
            <person name="Scholz P."/>
            <person name="Haring V."/>
            <person name="Wittmann-Liebold B."/>
            <person name="Ashman K."/>
            <person name="Bagdasarian M."/>
            <person name="Scherzinger E."/>
        </authorList>
    </citation>
    <scope>NUCLEOTIDE SEQUENCE [GENOMIC DNA]</scope>
</reference>
<feature type="chain" id="PRO_0000068393" description="Mobilization protein B">
    <location>
        <begin position="1"/>
        <end position="137"/>
    </location>
</feature>
<gene>
    <name type="primary">mobB</name>
</gene>
<accession>P07113</accession>
<sequence>MNAIDRVKKSRGINELAEQIEPLAQSMATLADEARQVMSQTQQASEAQAAEWLKAQRQTGAAWVELAKELREVAAEVSSAAQSARSASRGWHWKLWLTVMLASMMPTVVLLIASLLLLDLTPLTTEDGSIWLRLVAR</sequence>
<geneLocation type="plasmid">
    <name>IncQ RSF1010</name>
</geneLocation>
<comment type="function">
    <text>This protein is essential to promote the specific transfer of the plasmid in the presence of conjugative plasmids.</text>
</comment>
<comment type="subunit">
    <text>Interacts with MobA and MobC to form the relaxosome.</text>
</comment>
<protein>
    <recommendedName>
        <fullName>Mobilization protein B</fullName>
    </recommendedName>
</protein>
<proteinExistence type="predicted"/>
<name>MOBB2_ECOLX</name>
<keyword id="KW-0184">Conjugation</keyword>
<keyword id="KW-0499">Mobility protein</keyword>
<keyword id="KW-0614">Plasmid</keyword>
<organism>
    <name type="scientific">Escherichia coli</name>
    <dbReference type="NCBI Taxonomy" id="562"/>
    <lineage>
        <taxon>Bacteria</taxon>
        <taxon>Pseudomonadati</taxon>
        <taxon>Pseudomonadota</taxon>
        <taxon>Gammaproteobacteria</taxon>
        <taxon>Enterobacterales</taxon>
        <taxon>Enterobacteriaceae</taxon>
        <taxon>Escherichia</taxon>
    </lineage>
</organism>